<gene>
    <name evidence="1" type="primary">rpoA</name>
</gene>
<accession>Q60F88</accession>
<accession>Q1HAE5</accession>
<accession>Q5EGG9</accession>
<dbReference type="EC" id="2.7.7.6" evidence="1"/>
<dbReference type="EMBL" id="AB193121">
    <property type="protein sequence ID" value="BAD60944.2"/>
    <property type="molecule type" value="Genomic_DNA"/>
</dbReference>
<dbReference type="EMBL" id="AB254140">
    <property type="protein sequence ID" value="BAE94567.1"/>
    <property type="molecule type" value="mRNA"/>
</dbReference>
<dbReference type="EMBL" id="AY884000">
    <property type="protein sequence ID" value="AAW82426.1"/>
    <property type="status" value="ALT_SEQ"/>
    <property type="molecule type" value="Genomic_DNA"/>
</dbReference>
<dbReference type="SMR" id="Q60F88"/>
<dbReference type="GO" id="GO:0009507">
    <property type="term" value="C:chloroplast"/>
    <property type="evidence" value="ECO:0007669"/>
    <property type="project" value="UniProtKB-SubCell"/>
</dbReference>
<dbReference type="GO" id="GO:0000428">
    <property type="term" value="C:DNA-directed RNA polymerase complex"/>
    <property type="evidence" value="ECO:0007669"/>
    <property type="project" value="UniProtKB-KW"/>
</dbReference>
<dbReference type="GO" id="GO:0005739">
    <property type="term" value="C:mitochondrion"/>
    <property type="evidence" value="ECO:0007669"/>
    <property type="project" value="GOC"/>
</dbReference>
<dbReference type="GO" id="GO:0003677">
    <property type="term" value="F:DNA binding"/>
    <property type="evidence" value="ECO:0007669"/>
    <property type="project" value="UniProtKB-UniRule"/>
</dbReference>
<dbReference type="GO" id="GO:0003899">
    <property type="term" value="F:DNA-directed RNA polymerase activity"/>
    <property type="evidence" value="ECO:0007669"/>
    <property type="project" value="UniProtKB-UniRule"/>
</dbReference>
<dbReference type="GO" id="GO:0046983">
    <property type="term" value="F:protein dimerization activity"/>
    <property type="evidence" value="ECO:0007669"/>
    <property type="project" value="InterPro"/>
</dbReference>
<dbReference type="GO" id="GO:0006351">
    <property type="term" value="P:DNA-templated transcription"/>
    <property type="evidence" value="ECO:0007669"/>
    <property type="project" value="UniProtKB-UniRule"/>
</dbReference>
<dbReference type="CDD" id="cd06928">
    <property type="entry name" value="RNAP_alpha_NTD"/>
    <property type="match status" value="1"/>
</dbReference>
<dbReference type="FunFam" id="2.170.120.12:FF:000001">
    <property type="entry name" value="DNA-directed RNA polymerase subunit alpha"/>
    <property type="match status" value="1"/>
</dbReference>
<dbReference type="Gene3D" id="1.10.150.20">
    <property type="entry name" value="5' to 3' exonuclease, C-terminal subdomain"/>
    <property type="match status" value="1"/>
</dbReference>
<dbReference type="Gene3D" id="2.170.120.12">
    <property type="entry name" value="DNA-directed RNA polymerase, insert domain"/>
    <property type="match status" value="1"/>
</dbReference>
<dbReference type="Gene3D" id="3.30.1360.10">
    <property type="entry name" value="RNA polymerase, RBP11-like subunit"/>
    <property type="match status" value="1"/>
</dbReference>
<dbReference type="HAMAP" id="MF_00059">
    <property type="entry name" value="RNApol_bact_RpoA"/>
    <property type="match status" value="1"/>
</dbReference>
<dbReference type="InterPro" id="IPR011262">
    <property type="entry name" value="DNA-dir_RNA_pol_insert"/>
</dbReference>
<dbReference type="InterPro" id="IPR011263">
    <property type="entry name" value="DNA-dir_RNA_pol_RpoA/D/Rpb3"/>
</dbReference>
<dbReference type="InterPro" id="IPR011773">
    <property type="entry name" value="DNA-dir_RpoA"/>
</dbReference>
<dbReference type="InterPro" id="IPR036603">
    <property type="entry name" value="RBP11-like"/>
</dbReference>
<dbReference type="InterPro" id="IPR011260">
    <property type="entry name" value="RNAP_asu_C"/>
</dbReference>
<dbReference type="InterPro" id="IPR036643">
    <property type="entry name" value="RNApol_insert_sf"/>
</dbReference>
<dbReference type="NCBIfam" id="TIGR02027">
    <property type="entry name" value="rpoA"/>
    <property type="match status" value="1"/>
</dbReference>
<dbReference type="Pfam" id="PF01000">
    <property type="entry name" value="RNA_pol_A_bac"/>
    <property type="match status" value="1"/>
</dbReference>
<dbReference type="Pfam" id="PF03118">
    <property type="entry name" value="RNA_pol_A_CTD"/>
    <property type="match status" value="1"/>
</dbReference>
<dbReference type="Pfam" id="PF01193">
    <property type="entry name" value="RNA_pol_L"/>
    <property type="match status" value="1"/>
</dbReference>
<dbReference type="SMART" id="SM00662">
    <property type="entry name" value="RPOLD"/>
    <property type="match status" value="1"/>
</dbReference>
<dbReference type="SUPFAM" id="SSF47789">
    <property type="entry name" value="C-terminal domain of RNA polymerase alpha subunit"/>
    <property type="match status" value="1"/>
</dbReference>
<dbReference type="SUPFAM" id="SSF56553">
    <property type="entry name" value="Insert subdomain of RNA polymerase alpha subunit"/>
    <property type="match status" value="1"/>
</dbReference>
<dbReference type="SUPFAM" id="SSF55257">
    <property type="entry name" value="RBP11-like subunits of RNA polymerase"/>
    <property type="match status" value="1"/>
</dbReference>
<sequence length="341" mass="38787">MIRDEIPISAQVLQWRCVESRVDSARLHYSRFAISPFRSGQASTVGIAMRRALLGEVEGTCITCAEFKRVTHEYSTILGIQESVHDVLINLGEIVLRSDSYETQKAFISILGPKKVTAQDIILPPSVKIIDTTQYIATVTKAIHLDIELKIEKDFGYRIEDPIKSADGNFPVDAVFMPIRNVNYSVHSFENGNETQEILFLEIWTNGSVTPKEALYEASRSLINLFIPFLHAEKKEFIYGLKNTYESNMSYFSSPSLSADIDEMTKGVTFKHIFIDQLELPARAYNCLKRVNAHTISDLLNYSQDDLMKIKNFGKKSVEQVLEALQKRFSINLPKNKLHFH</sequence>
<comment type="function">
    <text>DNA-dependent RNA polymerase catalyzes the transcription of DNA into RNA using the four ribonucleoside triphosphates as substrates.</text>
</comment>
<comment type="catalytic activity">
    <reaction evidence="1">
        <text>RNA(n) + a ribonucleoside 5'-triphosphate = RNA(n+1) + diphosphate</text>
        <dbReference type="Rhea" id="RHEA:21248"/>
        <dbReference type="Rhea" id="RHEA-COMP:14527"/>
        <dbReference type="Rhea" id="RHEA-COMP:17342"/>
        <dbReference type="ChEBI" id="CHEBI:33019"/>
        <dbReference type="ChEBI" id="CHEBI:61557"/>
        <dbReference type="ChEBI" id="CHEBI:140395"/>
        <dbReference type="EC" id="2.7.7.6"/>
    </reaction>
</comment>
<comment type="subunit">
    <text evidence="1">In plastids the minimal PEP RNA polymerase catalytic core is composed of four subunits: alpha, beta, beta', and beta''. When a (nuclear-encoded) sigma factor is associated with the core the holoenzyme is formed, which can initiate transcription.</text>
</comment>
<comment type="subcellular location">
    <subcellularLocation>
        <location>Plastid</location>
        <location>Chloroplast</location>
    </subcellularLocation>
</comment>
<comment type="domain">
    <text evidence="1">The N-terminal domain is essential for RNAP assembly and basal transcription, whereas the C-terminal domain is involved in interaction with transcriptional regulators and with upstream promoter elements.</text>
</comment>
<comment type="RNA editing">
    <location>
        <position position="35" evidence="2"/>
    </location>
    <location>
        <position position="53" evidence="2"/>
    </location>
    <location>
        <position position="67" evidence="2"/>
    </location>
    <location>
        <position position="88" evidence="2"/>
    </location>
    <location>
        <position position="91" evidence="2"/>
    </location>
    <location>
        <position position="123" evidence="2"/>
    </location>
    <location>
        <position position="136" evidence="2"/>
    </location>
    <location>
        <position position="145" evidence="2"/>
    </location>
    <location>
        <position position="170" evidence="2"/>
    </location>
    <location>
        <position position="172" evidence="2"/>
    </location>
    <location>
        <position position="182" evidence="2"/>
    </location>
    <location>
        <position position="288" evidence="2"/>
    </location>
    <location>
        <position position="299" evidence="2"/>
    </location>
    <location>
        <position position="325" evidence="2"/>
    </location>
</comment>
<comment type="similarity">
    <text evidence="1">Belongs to the RNA polymerase alpha chain family.</text>
</comment>
<evidence type="ECO:0000255" key="1">
    <source>
        <dbReference type="HAMAP-Rule" id="MF_00059"/>
    </source>
</evidence>
<evidence type="ECO:0000269" key="2">
    <source>
    </source>
</evidence>
<feature type="chain" id="PRO_0000175500" description="DNA-directed RNA polymerase subunit alpha">
    <location>
        <begin position="1"/>
        <end position="341"/>
    </location>
</feature>
<feature type="region of interest" description="Alpha N-terminal domain (alpha-NTD)" evidence="1">
    <location>
        <begin position="1"/>
        <end position="233"/>
    </location>
</feature>
<feature type="region of interest" description="Alpha C-terminal domain (alpha-CTD)" evidence="1">
    <location>
        <begin position="265"/>
        <end position="341"/>
    </location>
</feature>
<organism>
    <name type="scientific">Takakia lepidozioides</name>
    <name type="common">Moss</name>
    <dbReference type="NCBI Taxonomy" id="37425"/>
    <lineage>
        <taxon>Eukaryota</taxon>
        <taxon>Viridiplantae</taxon>
        <taxon>Streptophyta</taxon>
        <taxon>Embryophyta</taxon>
        <taxon>Bryophyta</taxon>
        <taxon>Takakiophytina</taxon>
        <taxon>Takakiopsida</taxon>
        <taxon>Takakiales</taxon>
        <taxon>Takakiaceae</taxon>
        <taxon>Takakia</taxon>
    </lineage>
</organism>
<keyword id="KW-0150">Chloroplast</keyword>
<keyword id="KW-0240">DNA-directed RNA polymerase</keyword>
<keyword id="KW-0548">Nucleotidyltransferase</keyword>
<keyword id="KW-0934">Plastid</keyword>
<keyword id="KW-0691">RNA editing</keyword>
<keyword id="KW-0804">Transcription</keyword>
<keyword id="KW-0808">Transferase</keyword>
<proteinExistence type="evidence at transcript level"/>
<reference key="1">
    <citation type="journal article" date="2004" name="Hikobia">
        <title>Molecular evidence of an rpoA gene in the basal moss chloroplast genomes: rpoA is a useful molecular marker for phylogenetic analysis of mosses.</title>
        <authorList>
            <person name="Sugita M."/>
            <person name="Sugiura C."/>
            <person name="Arikawa T."/>
            <person name="Higuchi M."/>
        </authorList>
    </citation>
    <scope>NUCLEOTIDE SEQUENCE [GENOMIC DNA]</scope>
</reference>
<reference key="2">
    <citation type="journal article" date="2006" name="Biosci. Biotechnol. Biochem.">
        <title>Extensive RNA editing in transcripts from the psbB operon and rpoA gene of plastids from the enigmatic moss Takakia lepidozioides.</title>
        <authorList>
            <person name="Sugita M."/>
            <person name="Miyata Y."/>
            <person name="Maruyama K."/>
            <person name="Sugiura C."/>
            <person name="Arikawa T."/>
            <person name="Higuchi M."/>
        </authorList>
    </citation>
    <scope>NUCLEOTIDE SEQUENCE [MRNA]</scope>
    <scope>RNA EDITING</scope>
</reference>
<reference key="3">
    <citation type="submission" date="2005-01" db="EMBL/GenBank/DDBJ databases">
        <title>Phylogenetic significance of the rpoA loss in the chloroplast genome of mosses.</title>
        <authorList>
            <person name="Goffinet B."/>
            <person name="Wickett N.J."/>
            <person name="Shaw J.A."/>
            <person name="Cox C.J."/>
        </authorList>
    </citation>
    <scope>NUCLEOTIDE SEQUENCE [GENOMIC DNA]</scope>
</reference>
<protein>
    <recommendedName>
        <fullName evidence="1">DNA-directed RNA polymerase subunit alpha</fullName>
        <shortName evidence="1">PEP</shortName>
        <ecNumber evidence="1">2.7.7.6</ecNumber>
    </recommendedName>
    <alternativeName>
        <fullName evidence="1">Plastid-encoded RNA polymerase subunit alpha</fullName>
        <shortName evidence="1">RNA polymerase subunit alpha</shortName>
    </alternativeName>
</protein>
<name>RPOA_TAKLE</name>
<geneLocation type="chloroplast"/>